<feature type="chain" id="PRO_1000118672" description="Diaminopimelate epimerase">
    <location>
        <begin position="1"/>
        <end position="274"/>
    </location>
</feature>
<feature type="active site" description="Proton donor" evidence="1">
    <location>
        <position position="73"/>
    </location>
</feature>
<feature type="active site" description="Proton acceptor" evidence="1">
    <location>
        <position position="217"/>
    </location>
</feature>
<feature type="binding site" evidence="1">
    <location>
        <position position="11"/>
    </location>
    <ligand>
        <name>substrate</name>
    </ligand>
</feature>
<feature type="binding site" evidence="1">
    <location>
        <position position="44"/>
    </location>
    <ligand>
        <name>substrate</name>
    </ligand>
</feature>
<feature type="binding site" evidence="1">
    <location>
        <position position="64"/>
    </location>
    <ligand>
        <name>substrate</name>
    </ligand>
</feature>
<feature type="binding site" evidence="1">
    <location>
        <begin position="74"/>
        <end position="75"/>
    </location>
    <ligand>
        <name>substrate</name>
    </ligand>
</feature>
<feature type="binding site" evidence="1">
    <location>
        <position position="157"/>
    </location>
    <ligand>
        <name>substrate</name>
    </ligand>
</feature>
<feature type="binding site" evidence="1">
    <location>
        <position position="190"/>
    </location>
    <ligand>
        <name>substrate</name>
    </ligand>
</feature>
<feature type="binding site" evidence="1">
    <location>
        <begin position="208"/>
        <end position="209"/>
    </location>
    <ligand>
        <name>substrate</name>
    </ligand>
</feature>
<feature type="binding site" evidence="1">
    <location>
        <begin position="218"/>
        <end position="219"/>
    </location>
    <ligand>
        <name>substrate</name>
    </ligand>
</feature>
<feature type="site" description="Could be important to modulate the pK values of the two catalytic cysteine residues" evidence="1">
    <location>
        <position position="159"/>
    </location>
</feature>
<feature type="site" description="Could be important to modulate the pK values of the two catalytic cysteine residues" evidence="1">
    <location>
        <position position="208"/>
    </location>
</feature>
<feature type="site" description="Important for dimerization" evidence="1">
    <location>
        <position position="268"/>
    </location>
</feature>
<sequence length="274" mass="30209">MQFSKMHGLGNDFMVVDAVTQNVFFSPELIRRLADRHLGVGFDQLLVVEPPYDPELDFHYRIFNADGSEVAQCGNGARCFARFVRLKGLTNKRDIRVSTANGRMVLTVTDDDLVRVNMGEPNFEPSAVPFRANKAEKTYIMRAAEQTILCGVVSMGNPHCVIQVDDVDTAAVETLGPVLESHERFPERANIGFMQVVKREHIRLRVYERGAGETQACGSGACAAVAVGIQQGLLAEEVRVELPGGRLDIAWKGPGHPLYMTGPAVHVYDGFIHL</sequence>
<protein>
    <recommendedName>
        <fullName evidence="1">Diaminopimelate epimerase</fullName>
        <shortName evidence="1">DAP epimerase</shortName>
        <ecNumber evidence="1">5.1.1.7</ecNumber>
    </recommendedName>
    <alternativeName>
        <fullName evidence="1">PLP-independent amino acid racemase</fullName>
    </alternativeName>
</protein>
<reference key="1">
    <citation type="journal article" date="2009" name="PLoS Genet.">
        <title>Organised genome dynamics in the Escherichia coli species results in highly diverse adaptive paths.</title>
        <authorList>
            <person name="Touchon M."/>
            <person name="Hoede C."/>
            <person name="Tenaillon O."/>
            <person name="Barbe V."/>
            <person name="Baeriswyl S."/>
            <person name="Bidet P."/>
            <person name="Bingen E."/>
            <person name="Bonacorsi S."/>
            <person name="Bouchier C."/>
            <person name="Bouvet O."/>
            <person name="Calteau A."/>
            <person name="Chiapello H."/>
            <person name="Clermont O."/>
            <person name="Cruveiller S."/>
            <person name="Danchin A."/>
            <person name="Diard M."/>
            <person name="Dossat C."/>
            <person name="Karoui M.E."/>
            <person name="Frapy E."/>
            <person name="Garry L."/>
            <person name="Ghigo J.M."/>
            <person name="Gilles A.M."/>
            <person name="Johnson J."/>
            <person name="Le Bouguenec C."/>
            <person name="Lescat M."/>
            <person name="Mangenot S."/>
            <person name="Martinez-Jehanne V."/>
            <person name="Matic I."/>
            <person name="Nassif X."/>
            <person name="Oztas S."/>
            <person name="Petit M.A."/>
            <person name="Pichon C."/>
            <person name="Rouy Z."/>
            <person name="Ruf C.S."/>
            <person name="Schneider D."/>
            <person name="Tourret J."/>
            <person name="Vacherie B."/>
            <person name="Vallenet D."/>
            <person name="Medigue C."/>
            <person name="Rocha E.P.C."/>
            <person name="Denamur E."/>
        </authorList>
    </citation>
    <scope>NUCLEOTIDE SEQUENCE [LARGE SCALE GENOMIC DNA]</scope>
    <source>
        <strain>ATCC 35469 / DSM 13698 / BCRC 15582 / CCUG 18766 / IAM 14443 / JCM 21226 / LMG 7866 / NBRC 102419 / NCTC 12128 / CDC 0568-73</strain>
    </source>
</reference>
<gene>
    <name evidence="1" type="primary">dapF</name>
    <name type="ordered locus">EFER_3693</name>
</gene>
<proteinExistence type="inferred from homology"/>
<name>DAPF_ESCF3</name>
<organism>
    <name type="scientific">Escherichia fergusonii (strain ATCC 35469 / DSM 13698 / CCUG 18766 / IAM 14443 / JCM 21226 / LMG 7866 / NBRC 102419 / NCTC 12128 / CDC 0568-73)</name>
    <dbReference type="NCBI Taxonomy" id="585054"/>
    <lineage>
        <taxon>Bacteria</taxon>
        <taxon>Pseudomonadati</taxon>
        <taxon>Pseudomonadota</taxon>
        <taxon>Gammaproteobacteria</taxon>
        <taxon>Enterobacterales</taxon>
        <taxon>Enterobacteriaceae</taxon>
        <taxon>Escherichia</taxon>
    </lineage>
</organism>
<dbReference type="EC" id="5.1.1.7" evidence="1"/>
<dbReference type="EMBL" id="CU928158">
    <property type="protein sequence ID" value="CAQ91155.1"/>
    <property type="molecule type" value="Genomic_DNA"/>
</dbReference>
<dbReference type="RefSeq" id="WP_001160654.1">
    <property type="nucleotide sequence ID" value="NC_011740.1"/>
</dbReference>
<dbReference type="SMR" id="B7LU47"/>
<dbReference type="GeneID" id="93778134"/>
<dbReference type="KEGG" id="efe:EFER_3693"/>
<dbReference type="HOGENOM" id="CLU_053306_1_1_6"/>
<dbReference type="OrthoDB" id="9805408at2"/>
<dbReference type="UniPathway" id="UPA00034">
    <property type="reaction ID" value="UER00025"/>
</dbReference>
<dbReference type="Proteomes" id="UP000000745">
    <property type="component" value="Chromosome"/>
</dbReference>
<dbReference type="GO" id="GO:0005829">
    <property type="term" value="C:cytosol"/>
    <property type="evidence" value="ECO:0007669"/>
    <property type="project" value="TreeGrafter"/>
</dbReference>
<dbReference type="GO" id="GO:0008837">
    <property type="term" value="F:diaminopimelate epimerase activity"/>
    <property type="evidence" value="ECO:0007669"/>
    <property type="project" value="UniProtKB-UniRule"/>
</dbReference>
<dbReference type="GO" id="GO:0009089">
    <property type="term" value="P:lysine biosynthetic process via diaminopimelate"/>
    <property type="evidence" value="ECO:0007669"/>
    <property type="project" value="UniProtKB-UniRule"/>
</dbReference>
<dbReference type="FunFam" id="3.10.310.10:FF:000001">
    <property type="entry name" value="Diaminopimelate epimerase"/>
    <property type="match status" value="1"/>
</dbReference>
<dbReference type="FunFam" id="3.10.310.10:FF:000002">
    <property type="entry name" value="Diaminopimelate epimerase"/>
    <property type="match status" value="1"/>
</dbReference>
<dbReference type="Gene3D" id="3.10.310.10">
    <property type="entry name" value="Diaminopimelate Epimerase, Chain A, domain 1"/>
    <property type="match status" value="2"/>
</dbReference>
<dbReference type="HAMAP" id="MF_00197">
    <property type="entry name" value="DAP_epimerase"/>
    <property type="match status" value="1"/>
</dbReference>
<dbReference type="InterPro" id="IPR018510">
    <property type="entry name" value="DAP_epimerase_AS"/>
</dbReference>
<dbReference type="InterPro" id="IPR001653">
    <property type="entry name" value="DAP_epimerase_DapF"/>
</dbReference>
<dbReference type="NCBIfam" id="TIGR00652">
    <property type="entry name" value="DapF"/>
    <property type="match status" value="1"/>
</dbReference>
<dbReference type="PANTHER" id="PTHR31689:SF0">
    <property type="entry name" value="DIAMINOPIMELATE EPIMERASE"/>
    <property type="match status" value="1"/>
</dbReference>
<dbReference type="PANTHER" id="PTHR31689">
    <property type="entry name" value="DIAMINOPIMELATE EPIMERASE, CHLOROPLASTIC"/>
    <property type="match status" value="1"/>
</dbReference>
<dbReference type="Pfam" id="PF01678">
    <property type="entry name" value="DAP_epimerase"/>
    <property type="match status" value="2"/>
</dbReference>
<dbReference type="SUPFAM" id="SSF54506">
    <property type="entry name" value="Diaminopimelate epimerase-like"/>
    <property type="match status" value="1"/>
</dbReference>
<dbReference type="PROSITE" id="PS01326">
    <property type="entry name" value="DAP_EPIMERASE"/>
    <property type="match status" value="1"/>
</dbReference>
<comment type="function">
    <text evidence="1">Catalyzes the stereoinversion of LL-2,6-diaminopimelate (L,L-DAP) to meso-diaminopimelate (meso-DAP), a precursor of L-lysine and an essential component of the bacterial peptidoglycan.</text>
</comment>
<comment type="catalytic activity">
    <reaction evidence="1">
        <text>(2S,6S)-2,6-diaminopimelate = meso-2,6-diaminopimelate</text>
        <dbReference type="Rhea" id="RHEA:15393"/>
        <dbReference type="ChEBI" id="CHEBI:57609"/>
        <dbReference type="ChEBI" id="CHEBI:57791"/>
        <dbReference type="EC" id="5.1.1.7"/>
    </reaction>
</comment>
<comment type="pathway">
    <text evidence="1">Amino-acid biosynthesis; L-lysine biosynthesis via DAP pathway; DL-2,6-diaminopimelate from LL-2,6-diaminopimelate: step 1/1.</text>
</comment>
<comment type="subunit">
    <text evidence="1">Homodimer.</text>
</comment>
<comment type="subcellular location">
    <subcellularLocation>
        <location evidence="1">Cytoplasm</location>
    </subcellularLocation>
</comment>
<comment type="similarity">
    <text evidence="1">Belongs to the diaminopimelate epimerase family.</text>
</comment>
<keyword id="KW-0028">Amino-acid biosynthesis</keyword>
<keyword id="KW-0963">Cytoplasm</keyword>
<keyword id="KW-0413">Isomerase</keyword>
<keyword id="KW-0457">Lysine biosynthesis</keyword>
<accession>B7LU47</accession>
<evidence type="ECO:0000255" key="1">
    <source>
        <dbReference type="HAMAP-Rule" id="MF_00197"/>
    </source>
</evidence>